<accession>P75486</accession>
<dbReference type="EMBL" id="U00089">
    <property type="protein sequence ID" value="AAB96192.1"/>
    <property type="molecule type" value="Genomic_DNA"/>
</dbReference>
<dbReference type="PIR" id="S73870">
    <property type="entry name" value="S73870"/>
</dbReference>
<dbReference type="RefSeq" id="NP_109979.1">
    <property type="nucleotide sequence ID" value="NC_000912.1"/>
</dbReference>
<dbReference type="RefSeq" id="WP_010874648.1">
    <property type="nucleotide sequence ID" value="NC_000912.1"/>
</dbReference>
<dbReference type="SMR" id="P75486"/>
<dbReference type="STRING" id="272634.MPN_291"/>
<dbReference type="EnsemblBacteria" id="AAB96192">
    <property type="protein sequence ID" value="AAB96192"/>
    <property type="gene ID" value="MPN_291"/>
</dbReference>
<dbReference type="KEGG" id="mpn:MPN_291"/>
<dbReference type="PATRIC" id="fig|272634.6.peg.315"/>
<dbReference type="HOGENOM" id="CLU_064886_0_2_14"/>
<dbReference type="OrthoDB" id="9784166at2"/>
<dbReference type="BioCyc" id="MPNE272634:G1GJ3-458-MONOMER"/>
<dbReference type="Proteomes" id="UP000000808">
    <property type="component" value="Chromosome"/>
</dbReference>
<dbReference type="GO" id="GO:0002949">
    <property type="term" value="P:tRNA threonylcarbamoyladenosine modification"/>
    <property type="evidence" value="ECO:0007669"/>
    <property type="project" value="InterPro"/>
</dbReference>
<dbReference type="Gene3D" id="3.30.420.200">
    <property type="match status" value="1"/>
</dbReference>
<dbReference type="Gene3D" id="3.30.420.40">
    <property type="match status" value="1"/>
</dbReference>
<dbReference type="InterPro" id="IPR043129">
    <property type="entry name" value="ATPase_NBD"/>
</dbReference>
<dbReference type="InterPro" id="IPR000905">
    <property type="entry name" value="Gcp-like_dom"/>
</dbReference>
<dbReference type="InterPro" id="IPR022496">
    <property type="entry name" value="T6A_TsaB"/>
</dbReference>
<dbReference type="NCBIfam" id="TIGR03725">
    <property type="entry name" value="T6A_YeaZ"/>
    <property type="match status" value="1"/>
</dbReference>
<dbReference type="Pfam" id="PF00814">
    <property type="entry name" value="TsaD"/>
    <property type="match status" value="1"/>
</dbReference>
<dbReference type="SUPFAM" id="SSF53067">
    <property type="entry name" value="Actin-like ATPase domain"/>
    <property type="match status" value="1"/>
</dbReference>
<proteinExistence type="predicted"/>
<gene>
    <name type="ordered locus">MPN_291</name>
    <name type="ORF">H10_orf196</name>
    <name type="ORF">MP544</name>
</gene>
<keyword id="KW-1185">Reference proteome</keyword>
<protein>
    <recommendedName>
        <fullName>Uncharacterized protein MG208 homolog</fullName>
    </recommendedName>
</protein>
<reference key="1">
    <citation type="journal article" date="1996" name="Nucleic Acids Res.">
        <title>Complete sequence analysis of the genome of the bacterium Mycoplasma pneumoniae.</title>
        <authorList>
            <person name="Himmelreich R."/>
            <person name="Hilbert H."/>
            <person name="Plagens H."/>
            <person name="Pirkl E."/>
            <person name="Li B.-C."/>
            <person name="Herrmann R."/>
        </authorList>
    </citation>
    <scope>NUCLEOTIDE SEQUENCE [LARGE SCALE GENOMIC DNA]</scope>
    <source>
        <strain>ATCC 29342 / M129 / Subtype 1</strain>
    </source>
</reference>
<feature type="chain" id="PRO_0000210455" description="Uncharacterized protein MG208 homolog">
    <location>
        <begin position="1"/>
        <end position="196"/>
    </location>
</feature>
<sequence>MRFFNKYKLFLDCAYKHLNIVLLDFKTNTVVDQLTIPVQQNLTELAVYHLEKLLKKNKVRNNTVRQFYVTTGPGSFTGQRVGAIIAKTWCTVNPNCQLFALNSLRLQIPYGCGISKISAGNEKNYCGLFTETTSEIALLAKPDFVKLCKANTELPVYENFENIDSIEELFLNNIERFELVENPQNLELLYLKDPVN</sequence>
<organism>
    <name type="scientific">Mycoplasma pneumoniae (strain ATCC 29342 / M129 / Subtype 1)</name>
    <name type="common">Mycoplasmoides pneumoniae</name>
    <dbReference type="NCBI Taxonomy" id="272634"/>
    <lineage>
        <taxon>Bacteria</taxon>
        <taxon>Bacillati</taxon>
        <taxon>Mycoplasmatota</taxon>
        <taxon>Mycoplasmoidales</taxon>
        <taxon>Mycoplasmoidaceae</taxon>
        <taxon>Mycoplasmoides</taxon>
    </lineage>
</organism>
<name>Y291_MYCPN</name>